<name>GPR_BACAA</name>
<gene>
    <name evidence="1" type="primary">gpr</name>
    <name type="ordered locus">BAA_4565</name>
</gene>
<dbReference type="EC" id="3.4.24.78" evidence="1"/>
<dbReference type="EMBL" id="CP001598">
    <property type="protein sequence ID" value="ACQ50329.1"/>
    <property type="molecule type" value="Genomic_DNA"/>
</dbReference>
<dbReference type="RefSeq" id="WP_000662639.1">
    <property type="nucleotide sequence ID" value="NC_012659.1"/>
</dbReference>
<dbReference type="SMR" id="C3P8M7"/>
<dbReference type="MEROPS" id="A25.001"/>
<dbReference type="GeneID" id="45024198"/>
<dbReference type="KEGG" id="bai:BAA_4565"/>
<dbReference type="HOGENOM" id="CLU_055087_1_0_9"/>
<dbReference type="GO" id="GO:0004222">
    <property type="term" value="F:metalloendopeptidase activity"/>
    <property type="evidence" value="ECO:0007669"/>
    <property type="project" value="UniProtKB-UniRule"/>
</dbReference>
<dbReference type="GO" id="GO:0006508">
    <property type="term" value="P:proteolysis"/>
    <property type="evidence" value="ECO:0007669"/>
    <property type="project" value="UniProtKB-UniRule"/>
</dbReference>
<dbReference type="GO" id="GO:0009847">
    <property type="term" value="P:spore germination"/>
    <property type="evidence" value="ECO:0007669"/>
    <property type="project" value="UniProtKB-UniRule"/>
</dbReference>
<dbReference type="FunFam" id="3.40.50.1450:FF:000004">
    <property type="entry name" value="Germination protease"/>
    <property type="match status" value="1"/>
</dbReference>
<dbReference type="Gene3D" id="3.40.50.1450">
    <property type="entry name" value="HybD-like"/>
    <property type="match status" value="1"/>
</dbReference>
<dbReference type="HAMAP" id="MF_00626">
    <property type="entry name" value="Germination_prot"/>
    <property type="match status" value="1"/>
</dbReference>
<dbReference type="InterPro" id="IPR023430">
    <property type="entry name" value="Pept_HybD-like_dom_sf"/>
</dbReference>
<dbReference type="InterPro" id="IPR005080">
    <property type="entry name" value="Peptidase_A25"/>
</dbReference>
<dbReference type="NCBIfam" id="TIGR01441">
    <property type="entry name" value="GPR"/>
    <property type="match status" value="1"/>
</dbReference>
<dbReference type="Pfam" id="PF03418">
    <property type="entry name" value="Peptidase_A25"/>
    <property type="match status" value="1"/>
</dbReference>
<dbReference type="PIRSF" id="PIRSF019549">
    <property type="entry name" value="Peptidase_A25"/>
    <property type="match status" value="1"/>
</dbReference>
<dbReference type="SUPFAM" id="SSF53163">
    <property type="entry name" value="HybD-like"/>
    <property type="match status" value="1"/>
</dbReference>
<accession>C3P8M7</accession>
<comment type="function">
    <text evidence="1">Initiates the rapid degradation of small, acid-soluble proteins during spore germination.</text>
</comment>
<comment type="catalytic activity">
    <reaction evidence="1">
        <text>Endopeptidase action with P4 Glu or Asp, P1 preferably Glu &gt; Asp, P1' hydrophobic and P2' Ala.</text>
        <dbReference type="EC" id="3.4.24.78"/>
    </reaction>
</comment>
<comment type="subunit">
    <text evidence="1">Homotetramer.</text>
</comment>
<comment type="PTM">
    <text evidence="1">Autoproteolytically processed. The inactive tetrameric zymogen termed p46 autoprocesses to a smaller form termed p41, which is active only during spore germination.</text>
</comment>
<comment type="similarity">
    <text evidence="1">Belongs to the peptidase A25 family.</text>
</comment>
<protein>
    <recommendedName>
        <fullName evidence="1">Germination protease</fullName>
        <ecNumber evidence="1">3.4.24.78</ecNumber>
    </recommendedName>
    <alternativeName>
        <fullName evidence="1">GPR endopeptidase</fullName>
    </alternativeName>
    <alternativeName>
        <fullName evidence="1">Germination proteinase</fullName>
    </alternativeName>
    <alternativeName>
        <fullName evidence="1">Spore protease</fullName>
    </alternativeName>
</protein>
<keyword id="KW-0378">Hydrolase</keyword>
<keyword id="KW-0645">Protease</keyword>
<keyword id="KW-0865">Zymogen</keyword>
<reference key="1">
    <citation type="submission" date="2009-04" db="EMBL/GenBank/DDBJ databases">
        <title>Genome sequence of Bacillus anthracis A0248.</title>
        <authorList>
            <person name="Dodson R.J."/>
            <person name="Munk A.C."/>
            <person name="Bruce D."/>
            <person name="Detter C."/>
            <person name="Tapia R."/>
            <person name="Sutton G."/>
            <person name="Sims D."/>
            <person name="Brettin T."/>
        </authorList>
    </citation>
    <scope>NUCLEOTIDE SEQUENCE [LARGE SCALE GENOMIC DNA]</scope>
    <source>
        <strain>A0248</strain>
    </source>
</reference>
<sequence length="368" mass="40605">MKEPLDLSKYSVRTDLAVEAHQMLQERQEEQQQGIQGVIVKEREEEGIIITKVTIDEVASESMGKKPGNYLTLEVQGIRQQDTELQQKVERIFAKEFSYFLEEVGVTKEASCLIVGLGNWNVTPDALGPIVVENVLVTRHLFQLQPESVEEGFRPVSAIRPGVMGITGIETSDVIYGIIEKTKPDFVIAIDALAARSIERVNSTIQISDTGIHPGSGVGNKRKELSKETLGIPVIAIGVPTVVDAVSITSDTIDFILKHFGREMKEGNKPSRSLLPAGFTFGEKKKLTEEDMPDEKSRNMFLGAVGTLEDEEKRKLIYEVLSPLGHNLMVTPKEVDAFIEDMANVIASGLNAALHHQIDQDNTGAYTH</sequence>
<organism>
    <name type="scientific">Bacillus anthracis (strain A0248)</name>
    <dbReference type="NCBI Taxonomy" id="592021"/>
    <lineage>
        <taxon>Bacteria</taxon>
        <taxon>Bacillati</taxon>
        <taxon>Bacillota</taxon>
        <taxon>Bacilli</taxon>
        <taxon>Bacillales</taxon>
        <taxon>Bacillaceae</taxon>
        <taxon>Bacillus</taxon>
        <taxon>Bacillus cereus group</taxon>
    </lineage>
</organism>
<proteinExistence type="inferred from homology"/>
<feature type="propeptide" id="PRO_1000147249" evidence="1">
    <location>
        <begin position="1"/>
        <end position="15"/>
    </location>
</feature>
<feature type="chain" id="PRO_1000147250" description="Germination protease">
    <location>
        <begin position="16"/>
        <end position="368"/>
    </location>
</feature>
<evidence type="ECO:0000255" key="1">
    <source>
        <dbReference type="HAMAP-Rule" id="MF_00626"/>
    </source>
</evidence>